<sequence>MQVILKEDVVNLGYKDDIVTVKDGYGRNFLIPQGKAVIASESAKKVLAENLRQRAHKIAQIKKEAEEKAASMQGISLTIKAKTSSTGTIFGSVTNIQIAEELAKKGVEVDRKIIVLKPAVKEVGNYTAVVRLHKEVTVEIPFEVVSENETIIEAKPEGAPVPVAEEPAAEAEQAEVAAE</sequence>
<accession>B2RIG5</accession>
<keyword id="KW-0687">Ribonucleoprotein</keyword>
<keyword id="KW-0689">Ribosomal protein</keyword>
<keyword id="KW-0694">RNA-binding</keyword>
<keyword id="KW-0699">rRNA-binding</keyword>
<protein>
    <recommendedName>
        <fullName evidence="1">Large ribosomal subunit protein bL9</fullName>
    </recommendedName>
    <alternativeName>
        <fullName evidence="3">50S ribosomal protein L9</fullName>
    </alternativeName>
</protein>
<comment type="function">
    <text evidence="1">Binds to the 23S rRNA.</text>
</comment>
<comment type="similarity">
    <text evidence="1">Belongs to the bacterial ribosomal protein bL9 family.</text>
</comment>
<dbReference type="EMBL" id="AP009380">
    <property type="protein sequence ID" value="BAG33160.1"/>
    <property type="molecule type" value="Genomic_DNA"/>
</dbReference>
<dbReference type="RefSeq" id="WP_012457666.1">
    <property type="nucleotide sequence ID" value="NZ_CP025930.1"/>
</dbReference>
<dbReference type="SMR" id="B2RIG5"/>
<dbReference type="GeneID" id="29255867"/>
<dbReference type="KEGG" id="pgn:PGN_0641"/>
<dbReference type="eggNOG" id="COG0359">
    <property type="taxonomic scope" value="Bacteria"/>
</dbReference>
<dbReference type="HOGENOM" id="CLU_078938_3_0_10"/>
<dbReference type="OrthoDB" id="9788336at2"/>
<dbReference type="BioCyc" id="PGIN431947:G1G2V-704-MONOMER"/>
<dbReference type="Proteomes" id="UP000008842">
    <property type="component" value="Chromosome"/>
</dbReference>
<dbReference type="GO" id="GO:1990904">
    <property type="term" value="C:ribonucleoprotein complex"/>
    <property type="evidence" value="ECO:0007669"/>
    <property type="project" value="UniProtKB-KW"/>
</dbReference>
<dbReference type="GO" id="GO:0005840">
    <property type="term" value="C:ribosome"/>
    <property type="evidence" value="ECO:0007669"/>
    <property type="project" value="UniProtKB-KW"/>
</dbReference>
<dbReference type="GO" id="GO:0019843">
    <property type="term" value="F:rRNA binding"/>
    <property type="evidence" value="ECO:0007669"/>
    <property type="project" value="UniProtKB-UniRule"/>
</dbReference>
<dbReference type="GO" id="GO:0003735">
    <property type="term" value="F:structural constituent of ribosome"/>
    <property type="evidence" value="ECO:0007669"/>
    <property type="project" value="InterPro"/>
</dbReference>
<dbReference type="GO" id="GO:0006412">
    <property type="term" value="P:translation"/>
    <property type="evidence" value="ECO:0007669"/>
    <property type="project" value="UniProtKB-UniRule"/>
</dbReference>
<dbReference type="FunFam" id="3.10.430.100:FF:000006">
    <property type="entry name" value="50S ribosomal protein L9"/>
    <property type="match status" value="1"/>
</dbReference>
<dbReference type="Gene3D" id="3.10.430.100">
    <property type="entry name" value="Ribosomal protein L9, C-terminal domain"/>
    <property type="match status" value="1"/>
</dbReference>
<dbReference type="Gene3D" id="3.40.5.10">
    <property type="entry name" value="Ribosomal protein L9, N-terminal domain"/>
    <property type="match status" value="1"/>
</dbReference>
<dbReference type="HAMAP" id="MF_00503">
    <property type="entry name" value="Ribosomal_bL9"/>
    <property type="match status" value="1"/>
</dbReference>
<dbReference type="InterPro" id="IPR000244">
    <property type="entry name" value="Ribosomal_bL9"/>
</dbReference>
<dbReference type="InterPro" id="IPR009027">
    <property type="entry name" value="Ribosomal_bL9/RNase_H1_N"/>
</dbReference>
<dbReference type="InterPro" id="IPR020594">
    <property type="entry name" value="Ribosomal_bL9_bac/chp"/>
</dbReference>
<dbReference type="InterPro" id="IPR020069">
    <property type="entry name" value="Ribosomal_bL9_C"/>
</dbReference>
<dbReference type="InterPro" id="IPR036791">
    <property type="entry name" value="Ribosomal_bL9_C_sf"/>
</dbReference>
<dbReference type="InterPro" id="IPR020070">
    <property type="entry name" value="Ribosomal_bL9_N"/>
</dbReference>
<dbReference type="InterPro" id="IPR036935">
    <property type="entry name" value="Ribosomal_bL9_N_sf"/>
</dbReference>
<dbReference type="NCBIfam" id="TIGR00158">
    <property type="entry name" value="L9"/>
    <property type="match status" value="1"/>
</dbReference>
<dbReference type="PANTHER" id="PTHR21368">
    <property type="entry name" value="50S RIBOSOMAL PROTEIN L9"/>
    <property type="match status" value="1"/>
</dbReference>
<dbReference type="Pfam" id="PF03948">
    <property type="entry name" value="Ribosomal_L9_C"/>
    <property type="match status" value="1"/>
</dbReference>
<dbReference type="Pfam" id="PF01281">
    <property type="entry name" value="Ribosomal_L9_N"/>
    <property type="match status" value="1"/>
</dbReference>
<dbReference type="SUPFAM" id="SSF55658">
    <property type="entry name" value="L9 N-domain-like"/>
    <property type="match status" value="1"/>
</dbReference>
<dbReference type="SUPFAM" id="SSF55653">
    <property type="entry name" value="Ribosomal protein L9 C-domain"/>
    <property type="match status" value="1"/>
</dbReference>
<evidence type="ECO:0000255" key="1">
    <source>
        <dbReference type="HAMAP-Rule" id="MF_00503"/>
    </source>
</evidence>
<evidence type="ECO:0000256" key="2">
    <source>
        <dbReference type="SAM" id="MobiDB-lite"/>
    </source>
</evidence>
<evidence type="ECO:0000305" key="3"/>
<reference key="1">
    <citation type="journal article" date="2008" name="DNA Res.">
        <title>Determination of the genome sequence of Porphyromonas gingivalis strain ATCC 33277 and genomic comparison with strain W83 revealed extensive genome rearrangements in P. gingivalis.</title>
        <authorList>
            <person name="Naito M."/>
            <person name="Hirakawa H."/>
            <person name="Yamashita A."/>
            <person name="Ohara N."/>
            <person name="Shoji M."/>
            <person name="Yukitake H."/>
            <person name="Nakayama K."/>
            <person name="Toh H."/>
            <person name="Yoshimura F."/>
            <person name="Kuhara S."/>
            <person name="Hattori M."/>
            <person name="Hayashi T."/>
            <person name="Nakayama K."/>
        </authorList>
    </citation>
    <scope>NUCLEOTIDE SEQUENCE [LARGE SCALE GENOMIC DNA]</scope>
    <source>
        <strain>ATCC 33277 / DSM 20709 / CIP 103683 / JCM 12257 / NCTC 11834 / 2561</strain>
    </source>
</reference>
<organism>
    <name type="scientific">Porphyromonas gingivalis (strain ATCC 33277 / DSM 20709 / CIP 103683 / JCM 12257 / NCTC 11834 / 2561)</name>
    <dbReference type="NCBI Taxonomy" id="431947"/>
    <lineage>
        <taxon>Bacteria</taxon>
        <taxon>Pseudomonadati</taxon>
        <taxon>Bacteroidota</taxon>
        <taxon>Bacteroidia</taxon>
        <taxon>Bacteroidales</taxon>
        <taxon>Porphyromonadaceae</taxon>
        <taxon>Porphyromonas</taxon>
    </lineage>
</organism>
<feature type="chain" id="PRO_1000126952" description="Large ribosomal subunit protein bL9">
    <location>
        <begin position="1"/>
        <end position="179"/>
    </location>
</feature>
<feature type="region of interest" description="Disordered" evidence="2">
    <location>
        <begin position="156"/>
        <end position="179"/>
    </location>
</feature>
<feature type="compositionally biased region" description="Low complexity" evidence="2">
    <location>
        <begin position="157"/>
        <end position="166"/>
    </location>
</feature>
<feature type="compositionally biased region" description="Acidic residues" evidence="2">
    <location>
        <begin position="167"/>
        <end position="179"/>
    </location>
</feature>
<gene>
    <name evidence="1" type="primary">rplI</name>
    <name type="ordered locus">PGN_0641</name>
</gene>
<name>RL9_PORG3</name>
<proteinExistence type="inferred from homology"/>